<accession>Q0DZP5</accession>
<name>CML17_ORYSJ</name>
<reference key="1">
    <citation type="journal article" date="2005" name="Nature">
        <title>The map-based sequence of the rice genome.</title>
        <authorList>
            <consortium name="International rice genome sequencing project (IRGSP)"/>
        </authorList>
    </citation>
    <scope>NUCLEOTIDE SEQUENCE [LARGE SCALE GENOMIC DNA]</scope>
    <source>
        <strain>cv. Nipponbare</strain>
    </source>
</reference>
<reference key="2">
    <citation type="journal article" date="2008" name="Nucleic Acids Res.">
        <title>The rice annotation project database (RAP-DB): 2008 update.</title>
        <authorList>
            <consortium name="The rice annotation project (RAP)"/>
        </authorList>
    </citation>
    <scope>GENOME REANNOTATION</scope>
    <source>
        <strain>cv. Nipponbare</strain>
    </source>
</reference>
<reference key="3">
    <citation type="journal article" date="2013" name="Rice">
        <title>Improvement of the Oryza sativa Nipponbare reference genome using next generation sequence and optical map data.</title>
        <authorList>
            <person name="Kawahara Y."/>
            <person name="de la Bastide M."/>
            <person name="Hamilton J.P."/>
            <person name="Kanamori H."/>
            <person name="McCombie W.R."/>
            <person name="Ouyang S."/>
            <person name="Schwartz D.C."/>
            <person name="Tanaka T."/>
            <person name="Wu J."/>
            <person name="Zhou S."/>
            <person name="Childs K.L."/>
            <person name="Davidson R.M."/>
            <person name="Lin H."/>
            <person name="Quesada-Ocampo L."/>
            <person name="Vaillancourt B."/>
            <person name="Sakai H."/>
            <person name="Lee S.S."/>
            <person name="Kim J."/>
            <person name="Numa H."/>
            <person name="Itoh T."/>
            <person name="Buell C.R."/>
            <person name="Matsumoto T."/>
        </authorList>
    </citation>
    <scope>GENOME REANNOTATION</scope>
    <source>
        <strain>cv. Nipponbare</strain>
    </source>
</reference>
<reference key="4">
    <citation type="journal article" date="2007" name="BMC Plant Biol.">
        <title>Genome-wide identification and analyses of the rice calmodulin and related potential calcium sensor proteins.</title>
        <authorList>
            <person name="Boonburapong B."/>
            <person name="Buaboocha T."/>
        </authorList>
    </citation>
    <scope>GENE FAMILY</scope>
    <scope>NOMENCLATURE</scope>
</reference>
<keyword id="KW-0106">Calcium</keyword>
<keyword id="KW-0479">Metal-binding</keyword>
<keyword id="KW-1185">Reference proteome</keyword>
<keyword id="KW-0677">Repeat</keyword>
<dbReference type="EMBL" id="AP008208">
    <property type="protein sequence ID" value="BAF09293.1"/>
    <property type="molecule type" value="Genomic_DNA"/>
</dbReference>
<dbReference type="EMBL" id="AP014958">
    <property type="status" value="NOT_ANNOTATED_CDS"/>
    <property type="molecule type" value="Genomic_DNA"/>
</dbReference>
<dbReference type="RefSeq" id="XP_015623975.1">
    <property type="nucleotide sequence ID" value="XM_015768489.1"/>
</dbReference>
<dbReference type="SMR" id="Q0DZP5"/>
<dbReference type="FunCoup" id="Q0DZP5">
    <property type="interactions" value="155"/>
</dbReference>
<dbReference type="STRING" id="39947.Q0DZP5"/>
<dbReference type="PaxDb" id="39947-Q0DZP5"/>
<dbReference type="InParanoid" id="Q0DZP5"/>
<dbReference type="OrthoDB" id="26525at2759"/>
<dbReference type="Proteomes" id="UP000000763">
    <property type="component" value="Chromosome 2"/>
</dbReference>
<dbReference type="Proteomes" id="UP000059680">
    <property type="component" value="Chromosome 2"/>
</dbReference>
<dbReference type="GO" id="GO:0005509">
    <property type="term" value="F:calcium ion binding"/>
    <property type="evidence" value="ECO:0000318"/>
    <property type="project" value="GO_Central"/>
</dbReference>
<dbReference type="CDD" id="cd00051">
    <property type="entry name" value="EFh"/>
    <property type="match status" value="2"/>
</dbReference>
<dbReference type="FunFam" id="1.10.238.10:FF:000178">
    <property type="entry name" value="Calmodulin-2 A"/>
    <property type="match status" value="1"/>
</dbReference>
<dbReference type="FunFam" id="1.10.238.10:FF:000089">
    <property type="entry name" value="calmodulin-like protein 3"/>
    <property type="match status" value="1"/>
</dbReference>
<dbReference type="Gene3D" id="1.10.238.10">
    <property type="entry name" value="EF-hand"/>
    <property type="match status" value="2"/>
</dbReference>
<dbReference type="InterPro" id="IPR011992">
    <property type="entry name" value="EF-hand-dom_pair"/>
</dbReference>
<dbReference type="InterPro" id="IPR018247">
    <property type="entry name" value="EF_Hand_1_Ca_BS"/>
</dbReference>
<dbReference type="InterPro" id="IPR002048">
    <property type="entry name" value="EF_hand_dom"/>
</dbReference>
<dbReference type="InterPro" id="IPR039647">
    <property type="entry name" value="EF_hand_pair_protein_CML-like"/>
</dbReference>
<dbReference type="PANTHER" id="PTHR10891">
    <property type="entry name" value="EF-HAND CALCIUM-BINDING DOMAIN CONTAINING PROTEIN"/>
    <property type="match status" value="1"/>
</dbReference>
<dbReference type="Pfam" id="PF13499">
    <property type="entry name" value="EF-hand_7"/>
    <property type="match status" value="2"/>
</dbReference>
<dbReference type="SMART" id="SM00054">
    <property type="entry name" value="EFh"/>
    <property type="match status" value="4"/>
</dbReference>
<dbReference type="SUPFAM" id="SSF47473">
    <property type="entry name" value="EF-hand"/>
    <property type="match status" value="1"/>
</dbReference>
<dbReference type="PROSITE" id="PS00018">
    <property type="entry name" value="EF_HAND_1"/>
    <property type="match status" value="4"/>
</dbReference>
<dbReference type="PROSITE" id="PS50222">
    <property type="entry name" value="EF_HAND_2"/>
    <property type="match status" value="4"/>
</dbReference>
<feature type="chain" id="PRO_0000338432" description="Probable calcium-binding protein CML17">
    <location>
        <begin position="1"/>
        <end position="164"/>
    </location>
</feature>
<feature type="domain" description="EF-hand 1" evidence="2">
    <location>
        <begin position="4"/>
        <end position="39"/>
    </location>
</feature>
<feature type="domain" description="EF-hand 2" evidence="2">
    <location>
        <begin position="40"/>
        <end position="75"/>
    </location>
</feature>
<feature type="domain" description="EF-hand 3" evidence="2">
    <location>
        <begin position="88"/>
        <end position="123"/>
    </location>
</feature>
<feature type="domain" description="EF-hand 4" evidence="2">
    <location>
        <begin position="126"/>
        <end position="161"/>
    </location>
</feature>
<feature type="binding site" evidence="2">
    <location>
        <position position="17"/>
    </location>
    <ligand>
        <name>Ca(2+)</name>
        <dbReference type="ChEBI" id="CHEBI:29108"/>
        <label>1</label>
    </ligand>
</feature>
<feature type="binding site" evidence="2">
    <location>
        <position position="19"/>
    </location>
    <ligand>
        <name>Ca(2+)</name>
        <dbReference type="ChEBI" id="CHEBI:29108"/>
        <label>1</label>
    </ligand>
</feature>
<feature type="binding site" evidence="2">
    <location>
        <position position="21"/>
    </location>
    <ligand>
        <name>Ca(2+)</name>
        <dbReference type="ChEBI" id="CHEBI:29108"/>
        <label>1</label>
    </ligand>
</feature>
<feature type="binding site" evidence="2">
    <location>
        <position position="23"/>
    </location>
    <ligand>
        <name>Ca(2+)</name>
        <dbReference type="ChEBI" id="CHEBI:29108"/>
        <label>1</label>
    </ligand>
</feature>
<feature type="binding site" evidence="2">
    <location>
        <position position="28"/>
    </location>
    <ligand>
        <name>Ca(2+)</name>
        <dbReference type="ChEBI" id="CHEBI:29108"/>
        <label>1</label>
    </ligand>
</feature>
<feature type="binding site" evidence="2">
    <location>
        <position position="53"/>
    </location>
    <ligand>
        <name>Ca(2+)</name>
        <dbReference type="ChEBI" id="CHEBI:29108"/>
        <label>2</label>
    </ligand>
</feature>
<feature type="binding site" evidence="2">
    <location>
        <position position="55"/>
    </location>
    <ligand>
        <name>Ca(2+)</name>
        <dbReference type="ChEBI" id="CHEBI:29108"/>
        <label>2</label>
    </ligand>
</feature>
<feature type="binding site" evidence="2">
    <location>
        <position position="57"/>
    </location>
    <ligand>
        <name>Ca(2+)</name>
        <dbReference type="ChEBI" id="CHEBI:29108"/>
        <label>2</label>
    </ligand>
</feature>
<feature type="binding site" evidence="2">
    <location>
        <position position="59"/>
    </location>
    <ligand>
        <name>Ca(2+)</name>
        <dbReference type="ChEBI" id="CHEBI:29108"/>
        <label>2</label>
    </ligand>
</feature>
<feature type="binding site" evidence="2">
    <location>
        <position position="64"/>
    </location>
    <ligand>
        <name>Ca(2+)</name>
        <dbReference type="ChEBI" id="CHEBI:29108"/>
        <label>2</label>
    </ligand>
</feature>
<feature type="binding site" evidence="2">
    <location>
        <position position="101"/>
    </location>
    <ligand>
        <name>Ca(2+)</name>
        <dbReference type="ChEBI" id="CHEBI:29108"/>
        <label>3</label>
    </ligand>
</feature>
<feature type="binding site" evidence="2">
    <location>
        <position position="103"/>
    </location>
    <ligand>
        <name>Ca(2+)</name>
        <dbReference type="ChEBI" id="CHEBI:29108"/>
        <label>3</label>
    </ligand>
</feature>
<feature type="binding site" evidence="2">
    <location>
        <position position="105"/>
    </location>
    <ligand>
        <name>Ca(2+)</name>
        <dbReference type="ChEBI" id="CHEBI:29108"/>
        <label>3</label>
    </ligand>
</feature>
<feature type="binding site" evidence="2">
    <location>
        <position position="112"/>
    </location>
    <ligand>
        <name>Ca(2+)</name>
        <dbReference type="ChEBI" id="CHEBI:29108"/>
        <label>3</label>
    </ligand>
</feature>
<feature type="binding site" evidence="2">
    <location>
        <position position="139"/>
    </location>
    <ligand>
        <name>Ca(2+)</name>
        <dbReference type="ChEBI" id="CHEBI:29108"/>
        <label>4</label>
    </ligand>
</feature>
<feature type="binding site" evidence="2">
    <location>
        <position position="141"/>
    </location>
    <ligand>
        <name>Ca(2+)</name>
        <dbReference type="ChEBI" id="CHEBI:29108"/>
        <label>4</label>
    </ligand>
</feature>
<feature type="binding site" evidence="2">
    <location>
        <position position="143"/>
    </location>
    <ligand>
        <name>Ca(2+)</name>
        <dbReference type="ChEBI" id="CHEBI:29108"/>
        <label>4</label>
    </ligand>
</feature>
<feature type="binding site" evidence="2">
    <location>
        <position position="145"/>
    </location>
    <ligand>
        <name>Ca(2+)</name>
        <dbReference type="ChEBI" id="CHEBI:29108"/>
        <label>4</label>
    </ligand>
</feature>
<feature type="binding site" evidence="2">
    <location>
        <position position="150"/>
    </location>
    <ligand>
        <name>Ca(2+)</name>
        <dbReference type="ChEBI" id="CHEBI:29108"/>
        <label>4</label>
    </ligand>
</feature>
<protein>
    <recommendedName>
        <fullName>Probable calcium-binding protein CML17</fullName>
    </recommendedName>
    <alternativeName>
        <fullName>Calmodulin-like protein 17</fullName>
    </alternativeName>
</protein>
<proteinExistence type="evidence at transcript level"/>
<comment type="function">
    <text evidence="1">Potential calcium sensor.</text>
</comment>
<comment type="caution">
    <text evidence="3">Although assigned as a calmodulin family member by PubMed:17263873, it only contains EF-hand domains.</text>
</comment>
<evidence type="ECO:0000250" key="1"/>
<evidence type="ECO:0000255" key="2">
    <source>
        <dbReference type="PROSITE-ProRule" id="PRU00448"/>
    </source>
</evidence>
<evidence type="ECO:0000305" key="3"/>
<sequence length="164" mass="17911">MACDQQAELRRVFELFDRDGDGRITREELTESLERLGMPVHREELAATIARIDANGDGCVDMDEFTQLYETVMRVDGGGGGGGGACDVDEASMREAFDVFDRNGDGFITVDELGAVLASLGIKQGRTAEDCGRMIGQVDRDGDGRVDFLEFKQMMRGGAFATLR</sequence>
<gene>
    <name type="primary">CML17</name>
    <name type="ordered locus">Os02g0606600</name>
    <name type="ordered locus">LOC_Os02g39380</name>
</gene>
<organism>
    <name type="scientific">Oryza sativa subsp. japonica</name>
    <name type="common">Rice</name>
    <dbReference type="NCBI Taxonomy" id="39947"/>
    <lineage>
        <taxon>Eukaryota</taxon>
        <taxon>Viridiplantae</taxon>
        <taxon>Streptophyta</taxon>
        <taxon>Embryophyta</taxon>
        <taxon>Tracheophyta</taxon>
        <taxon>Spermatophyta</taxon>
        <taxon>Magnoliopsida</taxon>
        <taxon>Liliopsida</taxon>
        <taxon>Poales</taxon>
        <taxon>Poaceae</taxon>
        <taxon>BOP clade</taxon>
        <taxon>Oryzoideae</taxon>
        <taxon>Oryzeae</taxon>
        <taxon>Oryzinae</taxon>
        <taxon>Oryza</taxon>
        <taxon>Oryza sativa</taxon>
    </lineage>
</organism>